<proteinExistence type="evidence at protein level"/>
<keyword id="KW-0175">Coiled coil</keyword>
<keyword id="KW-0903">Direct protein sequencing</keyword>
<keyword id="KW-0413">Isomerase</keyword>
<keyword id="KW-0488">Methylation</keyword>
<keyword id="KW-1185">Reference proteome</keyword>
<keyword id="KW-0697">Rotamase</keyword>
<name>FKBP5_DICDI</name>
<dbReference type="EC" id="5.2.1.8"/>
<dbReference type="EMBL" id="AAFI02000163">
    <property type="protein sequence ID" value="EAL62232.1"/>
    <property type="molecule type" value="Genomic_DNA"/>
</dbReference>
<dbReference type="RefSeq" id="XP_635751.1">
    <property type="nucleotide sequence ID" value="XM_630659.1"/>
</dbReference>
<dbReference type="SMR" id="Q54G21"/>
<dbReference type="STRING" id="44689.Q54G21"/>
<dbReference type="GlyGen" id="Q54G21">
    <property type="glycosylation" value="3 sites"/>
</dbReference>
<dbReference type="PaxDb" id="44689-DDB0233865"/>
<dbReference type="EnsemblProtists" id="EAL62232">
    <property type="protein sequence ID" value="EAL62232"/>
    <property type="gene ID" value="DDB_G0290433"/>
</dbReference>
<dbReference type="GeneID" id="8627670"/>
<dbReference type="KEGG" id="ddi:DDB_G0290433"/>
<dbReference type="dictyBase" id="DDB_G0290433"/>
<dbReference type="VEuPathDB" id="AmoebaDB:DDB_G0290433"/>
<dbReference type="eggNOG" id="KOG0552">
    <property type="taxonomic scope" value="Eukaryota"/>
</dbReference>
<dbReference type="eggNOG" id="KOG4725">
    <property type="taxonomic scope" value="Eukaryota"/>
</dbReference>
<dbReference type="HOGENOM" id="CLU_243514_0_0_1"/>
<dbReference type="InParanoid" id="Q54G21"/>
<dbReference type="OMA" id="NPSHIAN"/>
<dbReference type="PhylomeDB" id="Q54G21"/>
<dbReference type="PRO" id="PR:Q54G21"/>
<dbReference type="Proteomes" id="UP000002195">
    <property type="component" value="Chromosome 5"/>
</dbReference>
<dbReference type="GO" id="GO:0000785">
    <property type="term" value="C:chromatin"/>
    <property type="evidence" value="ECO:0000318"/>
    <property type="project" value="GO_Central"/>
</dbReference>
<dbReference type="GO" id="GO:0005730">
    <property type="term" value="C:nucleolus"/>
    <property type="evidence" value="ECO:0000318"/>
    <property type="project" value="GO_Central"/>
</dbReference>
<dbReference type="GO" id="GO:0003755">
    <property type="term" value="F:peptidyl-prolyl cis-trans isomerase activity"/>
    <property type="evidence" value="ECO:0000318"/>
    <property type="project" value="GO_Central"/>
</dbReference>
<dbReference type="Gene3D" id="3.10.50.40">
    <property type="match status" value="1"/>
</dbReference>
<dbReference type="InterPro" id="IPR046357">
    <property type="entry name" value="PPIase_dom_sf"/>
</dbReference>
<dbReference type="InterPro" id="IPR001179">
    <property type="entry name" value="PPIase_FKBP_dom"/>
</dbReference>
<dbReference type="PANTHER" id="PTHR43811:SF19">
    <property type="entry name" value="39 KDA FK506-BINDING NUCLEAR PROTEIN"/>
    <property type="match status" value="1"/>
</dbReference>
<dbReference type="PANTHER" id="PTHR43811">
    <property type="entry name" value="FKBP-TYPE PEPTIDYL-PROLYL CIS-TRANS ISOMERASE FKPA"/>
    <property type="match status" value="1"/>
</dbReference>
<dbReference type="Pfam" id="PF00254">
    <property type="entry name" value="FKBP_C"/>
    <property type="match status" value="1"/>
</dbReference>
<dbReference type="SUPFAM" id="SSF54534">
    <property type="entry name" value="FKBP-like"/>
    <property type="match status" value="1"/>
</dbReference>
<dbReference type="PROSITE" id="PS50059">
    <property type="entry name" value="FKBP_PPIASE"/>
    <property type="match status" value="1"/>
</dbReference>
<protein>
    <recommendedName>
        <fullName>FK506-binding protein 5</fullName>
        <ecNumber>5.2.1.8</ecNumber>
    </recommendedName>
    <alternativeName>
        <fullName>Peptidyl-prolyl cis-trans isomerase</fullName>
        <shortName>PPIase</shortName>
    </alternativeName>
    <alternativeName>
        <fullName>Rotamase</fullName>
    </alternativeName>
</protein>
<sequence length="1622" mass="181595">MNFSEEEEYSNRNAASSQKLGSLFKDNNAMSGNQSLQYTNNKTQSSANSNSPDVLISFPIHLYKFDNNKNEYVSSGSIATAIVGYKSSGKYQLLAYDNNKNYIVTVNITAQFNYSVTTIYGSFTDGNGQNWSMTFNSAEESTKYATHVAIAKCASGGYQQITFVDINNQSKTKPVANGDRVSIKYAGWLENNQRVGSLFDSNLQSETPFRFVVGEGKVIKGWDLGVIGMRKSAKRILVIPSELAYGKKGHSTIPPNTNLIFDLEVTGSKKKEGSEPSLPSLNGQPSNAPQQSLPTQLFDNSPVPQDDKANLLQRVAKLGRATGFTSPPPSDSENESNSRNSHSNNSHNNNNNNNSNSNNNSNSNSNNNNNNNNQNNNNNNNNQNNNQNNNNNNNYNNNNNNNNGYNNNNNNNGYNNNNNYNNNMNNNNGFNNGMNNGFGNNSMNGMNNGFNNGMNGMNNGMNGGFGMNGNMYTSSQSPQFNPMGTFGSAYNQQQALIGSGALVPIMPQHQQPSIIVASPPPPVQQAPPPTPAPAPPPPTPVIVQAPPAPVQSTTETIQILVEEKQFKKEIKHSIDQFNSKLDQVSSKFDSLAQPIVKGDVPISGVLLVQTLHRLVEDNEKLIKENVEKENRMVTLKENIATLHKKNEQFLEENTKMMESRNEAITDNVAQMRRQIIDLQKQKTLVEDDLADKQMLHTKSQSVINQLKRDYNTLQEELNSAKEENQKSIQDQEALKQAEKDYALKIRAFKKSLLDEKNARKSDIEKINSLEDELKDAQDSLTQAEKSNEESLKRLKLDMVRIKKRNDDKVSQLTLEITTLKDTLETERSALSSVQTLVENTRLETESKFNLLLIKKEEAIAAAELSLSEEQSKYNKLVQSNNQQIDQLQKLIDDAKKKLDHEKEEVIKSYKKGFAEGIESTKQENDLITTLQQQIQQLTTQYDDTKKSLIETKEKLSTLESQPPKTIVKEVIVKVPSDGTTVAVASSNNVDVAKEVKVCMQKVFVQVSESFDEDEEYSTDSIMSTFKDVIKRVTVEYIQEQKEKQQQQQEKEEEEVVEEEEKEEEEKEEEEKEEEEKEEEKEEEKEQEEEEEEKEVVVEEIVTIAEEVKEEEVVVEEPVTVVEEVKEEKPTPAIEEPVVAKSQTVVDPLSTKDDEDDDDDEDDYDDINEEDLKNIDAEIEKMQQEMGDELEDDDDEEEEKEKETAPVVTKSEVVDPLSSTKEESEEEEEEETKVEVPVLEEEKEEEETKVEVPVLEDEQEDKVESDVEEKIVEPPTLDEDDFEKVEVPVLGDDEQDEKVVEEPAPEEEEETKVEVPVLNKDDDEDNEKDVASDSEETPSTPPPIDDVEEEEEKEEKVVEQVKEEINETKFESSPFAVDEPTTTEEKEEEKEEEKVEEEEEKVVEPPTIDDDETTAPVIPSIDNSPRQTTTEEEESSTTAATTSTTTTSSTPVKPDEADTTKKTPKKTSFFDFDDSPFSAETETETKSTAASSDPFADTTSSTPTSTKKKDFFSTDDDSLFGNSSDIFDKPSTTTKKDPFDTDSTDDLFGSIKTNKESTSTASSTSNGGLFDSDSLFGGISVAKSNNNTPSRQKQDFSSLFGSDPTISPLTETEPEEKEIVLPL</sequence>
<gene>
    <name type="primary">fkbp5</name>
    <name type="ORF">DDB_G0290433</name>
</gene>
<comment type="function">
    <text evidence="1">PPIases accelerate the folding of proteins by catalyzing the cis-trans isomerization of proline imidic peptide bonds in oligopeptides.</text>
</comment>
<comment type="catalytic activity">
    <reaction>
        <text>[protein]-peptidylproline (omega=180) = [protein]-peptidylproline (omega=0)</text>
        <dbReference type="Rhea" id="RHEA:16237"/>
        <dbReference type="Rhea" id="RHEA-COMP:10747"/>
        <dbReference type="Rhea" id="RHEA-COMP:10748"/>
        <dbReference type="ChEBI" id="CHEBI:83833"/>
        <dbReference type="ChEBI" id="CHEBI:83834"/>
        <dbReference type="EC" id="5.2.1.8"/>
    </reaction>
</comment>
<comment type="activity regulation">
    <text evidence="1">Inhibited by both FK506 and rapamycin.</text>
</comment>
<comment type="similarity">
    <text evidence="6">Belongs to the FKBP-type PPIase family.</text>
</comment>
<organism>
    <name type="scientific">Dictyostelium discoideum</name>
    <name type="common">Social amoeba</name>
    <dbReference type="NCBI Taxonomy" id="44689"/>
    <lineage>
        <taxon>Eukaryota</taxon>
        <taxon>Amoebozoa</taxon>
        <taxon>Evosea</taxon>
        <taxon>Eumycetozoa</taxon>
        <taxon>Dictyostelia</taxon>
        <taxon>Dictyosteliales</taxon>
        <taxon>Dictyosteliaceae</taxon>
        <taxon>Dictyostelium</taxon>
    </lineage>
</organism>
<evidence type="ECO:0000250" key="1"/>
<evidence type="ECO:0000255" key="2"/>
<evidence type="ECO:0000255" key="3">
    <source>
        <dbReference type="PROSITE-ProRule" id="PRU00277"/>
    </source>
</evidence>
<evidence type="ECO:0000256" key="4">
    <source>
        <dbReference type="SAM" id="MobiDB-lite"/>
    </source>
</evidence>
<evidence type="ECO:0000269" key="5">
    <source ref="2"/>
</evidence>
<evidence type="ECO:0000305" key="6"/>
<accession>Q54G21</accession>
<feature type="chain" id="PRO_0000331284" description="FK506-binding protein 5">
    <location>
        <begin position="1"/>
        <end position="1622"/>
    </location>
</feature>
<feature type="domain" description="PPIase FKBP-type" evidence="3">
    <location>
        <begin position="178"/>
        <end position="269"/>
    </location>
</feature>
<feature type="region of interest" description="Disordered" evidence="4">
    <location>
        <begin position="268"/>
        <end position="306"/>
    </location>
</feature>
<feature type="region of interest" description="Disordered" evidence="4">
    <location>
        <begin position="320"/>
        <end position="432"/>
    </location>
</feature>
<feature type="region of interest" description="Disordered" evidence="4">
    <location>
        <begin position="518"/>
        <end position="538"/>
    </location>
</feature>
<feature type="region of interest" description="Disordered" evidence="4">
    <location>
        <begin position="1043"/>
        <end position="1097"/>
    </location>
</feature>
<feature type="region of interest" description="Disordered" evidence="4">
    <location>
        <begin position="1122"/>
        <end position="1622"/>
    </location>
</feature>
<feature type="coiled-coil region" evidence="2">
    <location>
        <begin position="607"/>
        <end position="827"/>
    </location>
</feature>
<feature type="coiled-coil region" evidence="2">
    <location>
        <begin position="854"/>
        <end position="961"/>
    </location>
</feature>
<feature type="compositionally biased region" description="Polar residues" evidence="4">
    <location>
        <begin position="277"/>
        <end position="303"/>
    </location>
</feature>
<feature type="compositionally biased region" description="Low complexity" evidence="4">
    <location>
        <begin position="335"/>
        <end position="432"/>
    </location>
</feature>
<feature type="compositionally biased region" description="Acidic residues" evidence="4">
    <location>
        <begin position="1050"/>
        <end position="1093"/>
    </location>
</feature>
<feature type="compositionally biased region" description="Acidic residues" evidence="4">
    <location>
        <begin position="1152"/>
        <end position="1168"/>
    </location>
</feature>
<feature type="compositionally biased region" description="Basic and acidic residues" evidence="4">
    <location>
        <begin position="1169"/>
        <end position="1182"/>
    </location>
</feature>
<feature type="compositionally biased region" description="Acidic residues" evidence="4">
    <location>
        <begin position="1185"/>
        <end position="1199"/>
    </location>
</feature>
<feature type="compositionally biased region" description="Acidic residues" evidence="4">
    <location>
        <begin position="1222"/>
        <end position="1260"/>
    </location>
</feature>
<feature type="compositionally biased region" description="Basic and acidic residues" evidence="4">
    <location>
        <begin position="1261"/>
        <end position="1271"/>
    </location>
</feature>
<feature type="compositionally biased region" description="Acidic residues" evidence="4">
    <location>
        <begin position="1320"/>
        <end position="1335"/>
    </location>
</feature>
<feature type="compositionally biased region" description="Basic and acidic residues" evidence="4">
    <location>
        <begin position="1353"/>
        <end position="1369"/>
    </location>
</feature>
<feature type="compositionally biased region" description="Acidic residues" evidence="4">
    <location>
        <begin position="1380"/>
        <end position="1412"/>
    </location>
</feature>
<feature type="compositionally biased region" description="Low complexity" evidence="4">
    <location>
        <begin position="1435"/>
        <end position="1449"/>
    </location>
</feature>
<feature type="compositionally biased region" description="Low complexity" evidence="4">
    <location>
        <begin position="1465"/>
        <end position="1504"/>
    </location>
</feature>
<feature type="compositionally biased region" description="Polar residues" evidence="4">
    <location>
        <begin position="1519"/>
        <end position="1532"/>
    </location>
</feature>
<feature type="compositionally biased region" description="Polar residues" evidence="4">
    <location>
        <begin position="1581"/>
        <end position="1609"/>
    </location>
</feature>
<feature type="modified residue" description="Omega-N-methylarginine" evidence="5">
    <location>
        <position position="314"/>
    </location>
</feature>
<reference key="1">
    <citation type="journal article" date="2005" name="Nature">
        <title>The genome of the social amoeba Dictyostelium discoideum.</title>
        <authorList>
            <person name="Eichinger L."/>
            <person name="Pachebat J.A."/>
            <person name="Gloeckner G."/>
            <person name="Rajandream M.A."/>
            <person name="Sucgang R."/>
            <person name="Berriman M."/>
            <person name="Song J."/>
            <person name="Olsen R."/>
            <person name="Szafranski K."/>
            <person name="Xu Q."/>
            <person name="Tunggal B."/>
            <person name="Kummerfeld S."/>
            <person name="Madera M."/>
            <person name="Konfortov B.A."/>
            <person name="Rivero F."/>
            <person name="Bankier A.T."/>
            <person name="Lehmann R."/>
            <person name="Hamlin N."/>
            <person name="Davies R."/>
            <person name="Gaudet P."/>
            <person name="Fey P."/>
            <person name="Pilcher K."/>
            <person name="Chen G."/>
            <person name="Saunders D."/>
            <person name="Sodergren E.J."/>
            <person name="Davis P."/>
            <person name="Kerhornou A."/>
            <person name="Nie X."/>
            <person name="Hall N."/>
            <person name="Anjard C."/>
            <person name="Hemphill L."/>
            <person name="Bason N."/>
            <person name="Farbrother P."/>
            <person name="Desany B."/>
            <person name="Just E."/>
            <person name="Morio T."/>
            <person name="Rost R."/>
            <person name="Churcher C.M."/>
            <person name="Cooper J."/>
            <person name="Haydock S."/>
            <person name="van Driessche N."/>
            <person name="Cronin A."/>
            <person name="Goodhead I."/>
            <person name="Muzny D.M."/>
            <person name="Mourier T."/>
            <person name="Pain A."/>
            <person name="Lu M."/>
            <person name="Harper D."/>
            <person name="Lindsay R."/>
            <person name="Hauser H."/>
            <person name="James K.D."/>
            <person name="Quiles M."/>
            <person name="Madan Babu M."/>
            <person name="Saito T."/>
            <person name="Buchrieser C."/>
            <person name="Wardroper A."/>
            <person name="Felder M."/>
            <person name="Thangavelu M."/>
            <person name="Johnson D."/>
            <person name="Knights A."/>
            <person name="Loulseged H."/>
            <person name="Mungall K.L."/>
            <person name="Oliver K."/>
            <person name="Price C."/>
            <person name="Quail M.A."/>
            <person name="Urushihara H."/>
            <person name="Hernandez J."/>
            <person name="Rabbinowitsch E."/>
            <person name="Steffen D."/>
            <person name="Sanders M."/>
            <person name="Ma J."/>
            <person name="Kohara Y."/>
            <person name="Sharp S."/>
            <person name="Simmonds M.N."/>
            <person name="Spiegler S."/>
            <person name="Tivey A."/>
            <person name="Sugano S."/>
            <person name="White B."/>
            <person name="Walker D."/>
            <person name="Woodward J.R."/>
            <person name="Winckler T."/>
            <person name="Tanaka Y."/>
            <person name="Shaulsky G."/>
            <person name="Schleicher M."/>
            <person name="Weinstock G.M."/>
            <person name="Rosenthal A."/>
            <person name="Cox E.C."/>
            <person name="Chisholm R.L."/>
            <person name="Gibbs R.A."/>
            <person name="Loomis W.F."/>
            <person name="Platzer M."/>
            <person name="Kay R.R."/>
            <person name="Williams J.G."/>
            <person name="Dear P.H."/>
            <person name="Noegel A.A."/>
            <person name="Barrell B.G."/>
            <person name="Kuspa A."/>
        </authorList>
    </citation>
    <scope>NUCLEOTIDE SEQUENCE [LARGE SCALE GENOMIC DNA]</scope>
    <source>
        <strain>AX4</strain>
    </source>
</reference>
<reference key="2">
    <citation type="submission" date="2010-01" db="UniProtKB">
        <authorList>
            <person name="Bienvenut W.V."/>
            <person name="Veltman D.M."/>
            <person name="Insall R.H."/>
        </authorList>
    </citation>
    <scope>PROTEIN SEQUENCE OF 311-317; 588-597; 661-672; 699-708 AND 876-889</scope>
    <scope>METHYLATION AT ARG-314</scope>
    <scope>IDENTIFICATION BY MASS SPECTROMETRY</scope>
</reference>